<proteinExistence type="evidence at protein level"/>
<organism>
    <name type="scientific">Bacillus anthracis</name>
    <dbReference type="NCBI Taxonomy" id="1392"/>
    <lineage>
        <taxon>Bacteria</taxon>
        <taxon>Bacillati</taxon>
        <taxon>Bacillota</taxon>
        <taxon>Bacilli</taxon>
        <taxon>Bacillales</taxon>
        <taxon>Bacillaceae</taxon>
        <taxon>Bacillus</taxon>
        <taxon>Bacillus cereus group</taxon>
    </lineage>
</organism>
<dbReference type="EC" id="2.5.1.n9" evidence="1"/>
<dbReference type="EMBL" id="AE016879">
    <property type="protein sequence ID" value="AAP24339.1"/>
    <property type="status" value="ALT_INIT"/>
    <property type="molecule type" value="Genomic_DNA"/>
</dbReference>
<dbReference type="EMBL" id="AE017334">
    <property type="protein sequence ID" value="AAT29390.2"/>
    <property type="status" value="ALT_INIT"/>
    <property type="molecule type" value="Genomic_DNA"/>
</dbReference>
<dbReference type="EMBL" id="AE017225">
    <property type="protein sequence ID" value="AAT52621.1"/>
    <property type="molecule type" value="Genomic_DNA"/>
</dbReference>
<dbReference type="RefSeq" id="NP_842853.3">
    <property type="nucleotide sequence ID" value="NC_003997.3"/>
</dbReference>
<dbReference type="RefSeq" id="WP_000272089.1">
    <property type="nucleotide sequence ID" value="NZ_WXXJ01000007.1"/>
</dbReference>
<dbReference type="RefSeq" id="YP_026570.1">
    <property type="nucleotide sequence ID" value="NC_005945.1"/>
</dbReference>
<dbReference type="SMR" id="Q81ZG3"/>
<dbReference type="STRING" id="261594.GBAA_0304"/>
<dbReference type="DNASU" id="1086581"/>
<dbReference type="GeneID" id="45020362"/>
<dbReference type="KEGG" id="ban:BA_0304"/>
<dbReference type="KEGG" id="bar:GBAA_0304"/>
<dbReference type="KEGG" id="bat:BAS0290"/>
<dbReference type="PATRIC" id="fig|260799.14.peg.293"/>
<dbReference type="eggNOG" id="COG1646">
    <property type="taxonomic scope" value="Bacteria"/>
</dbReference>
<dbReference type="HOGENOM" id="CLU_095211_0_0_9"/>
<dbReference type="OMA" id="TGAHKEW"/>
<dbReference type="OrthoDB" id="2381757at2"/>
<dbReference type="UniPathway" id="UPA00940"/>
<dbReference type="Proteomes" id="UP000000427">
    <property type="component" value="Chromosome"/>
</dbReference>
<dbReference type="Proteomes" id="UP000000594">
    <property type="component" value="Chromosome"/>
</dbReference>
<dbReference type="GO" id="GO:0120536">
    <property type="term" value="F:heptaprenylglyceryl phosphate synthase activity"/>
    <property type="evidence" value="ECO:0000304"/>
    <property type="project" value="UniProtKB"/>
</dbReference>
<dbReference type="GO" id="GO:0000287">
    <property type="term" value="F:magnesium ion binding"/>
    <property type="evidence" value="ECO:0007669"/>
    <property type="project" value="UniProtKB-UniRule"/>
</dbReference>
<dbReference type="GO" id="GO:0004659">
    <property type="term" value="F:prenyltransferase activity"/>
    <property type="evidence" value="ECO:0000314"/>
    <property type="project" value="UniProtKB"/>
</dbReference>
<dbReference type="GO" id="GO:0046474">
    <property type="term" value="P:glycerophospholipid biosynthetic process"/>
    <property type="evidence" value="ECO:0000304"/>
    <property type="project" value="UniProtKB"/>
</dbReference>
<dbReference type="CDD" id="cd02812">
    <property type="entry name" value="PcrB_like"/>
    <property type="match status" value="1"/>
</dbReference>
<dbReference type="FunFam" id="3.20.20.390:FF:000001">
    <property type="entry name" value="Heptaprenylglyceryl phosphate synthase"/>
    <property type="match status" value="1"/>
</dbReference>
<dbReference type="Gene3D" id="3.20.20.390">
    <property type="entry name" value="FMN-linked oxidoreductases"/>
    <property type="match status" value="1"/>
</dbReference>
<dbReference type="HAMAP" id="MF_00112">
    <property type="entry name" value="GGGP_HepGP_synthase"/>
    <property type="match status" value="1"/>
</dbReference>
<dbReference type="InterPro" id="IPR039074">
    <property type="entry name" value="GGGP/HepGP_synthase_I"/>
</dbReference>
<dbReference type="InterPro" id="IPR038597">
    <property type="entry name" value="GGGP/HepGP_synthase_sf"/>
</dbReference>
<dbReference type="InterPro" id="IPR008205">
    <property type="entry name" value="GGGP_HepGP_synthase"/>
</dbReference>
<dbReference type="NCBIfam" id="TIGR01768">
    <property type="entry name" value="GGGP-family"/>
    <property type="match status" value="1"/>
</dbReference>
<dbReference type="NCBIfam" id="NF003197">
    <property type="entry name" value="PRK04169.1-1"/>
    <property type="match status" value="1"/>
</dbReference>
<dbReference type="NCBIfam" id="NF003199">
    <property type="entry name" value="PRK04169.1-3"/>
    <property type="match status" value="1"/>
</dbReference>
<dbReference type="PANTHER" id="PTHR40029">
    <property type="match status" value="1"/>
</dbReference>
<dbReference type="PANTHER" id="PTHR40029:SF2">
    <property type="entry name" value="HEPTAPRENYLGLYCERYL PHOSPHATE SYNTHASE"/>
    <property type="match status" value="1"/>
</dbReference>
<dbReference type="Pfam" id="PF01884">
    <property type="entry name" value="PcrB"/>
    <property type="match status" value="1"/>
</dbReference>
<dbReference type="SUPFAM" id="SSF51395">
    <property type="entry name" value="FMN-linked oxidoreductases"/>
    <property type="match status" value="1"/>
</dbReference>
<reference key="1">
    <citation type="journal article" date="2003" name="Nature">
        <title>The genome sequence of Bacillus anthracis Ames and comparison to closely related bacteria.</title>
        <authorList>
            <person name="Read T.D."/>
            <person name="Peterson S.N."/>
            <person name="Tourasse N.J."/>
            <person name="Baillie L.W."/>
            <person name="Paulsen I.T."/>
            <person name="Nelson K.E."/>
            <person name="Tettelin H."/>
            <person name="Fouts D.E."/>
            <person name="Eisen J.A."/>
            <person name="Gill S.R."/>
            <person name="Holtzapple E.K."/>
            <person name="Okstad O.A."/>
            <person name="Helgason E."/>
            <person name="Rilstone J."/>
            <person name="Wu M."/>
            <person name="Kolonay J.F."/>
            <person name="Beanan M.J."/>
            <person name="Dodson R.J."/>
            <person name="Brinkac L.M."/>
            <person name="Gwinn M.L."/>
            <person name="DeBoy R.T."/>
            <person name="Madpu R."/>
            <person name="Daugherty S.C."/>
            <person name="Durkin A.S."/>
            <person name="Haft D.H."/>
            <person name="Nelson W.C."/>
            <person name="Peterson J.D."/>
            <person name="Pop M."/>
            <person name="Khouri H.M."/>
            <person name="Radune D."/>
            <person name="Benton J.L."/>
            <person name="Mahamoud Y."/>
            <person name="Jiang L."/>
            <person name="Hance I.R."/>
            <person name="Weidman J.F."/>
            <person name="Berry K.J."/>
            <person name="Plaut R.D."/>
            <person name="Wolf A.M."/>
            <person name="Watkins K.L."/>
            <person name="Nierman W.C."/>
            <person name="Hazen A."/>
            <person name="Cline R.T."/>
            <person name="Redmond C."/>
            <person name="Thwaite J.E."/>
            <person name="White O."/>
            <person name="Salzberg S.L."/>
            <person name="Thomason B."/>
            <person name="Friedlander A.M."/>
            <person name="Koehler T.M."/>
            <person name="Hanna P.C."/>
            <person name="Kolstoe A.-B."/>
            <person name="Fraser C.M."/>
        </authorList>
    </citation>
    <scope>NUCLEOTIDE SEQUENCE [LARGE SCALE GENOMIC DNA]</scope>
    <source>
        <strain>Ames / isolate Porton</strain>
    </source>
</reference>
<reference key="2">
    <citation type="journal article" date="2009" name="J. Bacteriol.">
        <title>The complete genome sequence of Bacillus anthracis Ames 'Ancestor'.</title>
        <authorList>
            <person name="Ravel J."/>
            <person name="Jiang L."/>
            <person name="Stanley S.T."/>
            <person name="Wilson M.R."/>
            <person name="Decker R.S."/>
            <person name="Read T.D."/>
            <person name="Worsham P."/>
            <person name="Keim P.S."/>
            <person name="Salzberg S.L."/>
            <person name="Fraser-Liggett C.M."/>
            <person name="Rasko D.A."/>
        </authorList>
    </citation>
    <scope>NUCLEOTIDE SEQUENCE [LARGE SCALE GENOMIC DNA]</scope>
    <source>
        <strain>Ames ancestor</strain>
    </source>
</reference>
<reference key="3">
    <citation type="submission" date="2004-01" db="EMBL/GenBank/DDBJ databases">
        <title>Complete genome sequence of Bacillus anthracis Sterne.</title>
        <authorList>
            <person name="Brettin T.S."/>
            <person name="Bruce D."/>
            <person name="Challacombe J.F."/>
            <person name="Gilna P."/>
            <person name="Han C."/>
            <person name="Hill K."/>
            <person name="Hitchcock P."/>
            <person name="Jackson P."/>
            <person name="Keim P."/>
            <person name="Longmire J."/>
            <person name="Lucas S."/>
            <person name="Okinaka R."/>
            <person name="Richardson P."/>
            <person name="Rubin E."/>
            <person name="Tice H."/>
        </authorList>
    </citation>
    <scope>NUCLEOTIDE SEQUENCE [LARGE SCALE GENOMIC DNA]</scope>
    <source>
        <strain>Sterne</strain>
    </source>
</reference>
<reference key="4">
    <citation type="journal article" date="2011" name="Angew. Chem. Int. Ed. Engl.">
        <title>Functional assignment of an enzyme that catalyzes the synthesis of an archaea-type ether lipid in bacteria.</title>
        <authorList>
            <person name="Guldan H."/>
            <person name="Matysik F.M."/>
            <person name="Bocola M."/>
            <person name="Sterner R."/>
            <person name="Babinger P."/>
        </authorList>
    </citation>
    <scope>FUNCTION</scope>
    <scope>CATALYTIC ACTIVITY</scope>
    <scope>SUBUNIT</scope>
</reference>
<accession>Q81ZG3</accession>
<accession>Q6I4B0</accession>
<accession>Q6KY12</accession>
<protein>
    <recommendedName>
        <fullName evidence="1">Heptaprenylglyceryl phosphate synthase</fullName>
        <shortName evidence="1">HepGP synthase</shortName>
        <ecNumber evidence="1">2.5.1.n9</ecNumber>
    </recommendedName>
    <alternativeName>
        <fullName evidence="1">Glycerol-1-phosphate heptaprenyltransferase</fullName>
    </alternativeName>
</protein>
<feature type="chain" id="PRO_0000138703" description="Heptaprenylglyceryl phosphate synthase">
    <location>
        <begin position="1"/>
        <end position="229"/>
    </location>
</feature>
<feature type="binding site" evidence="1">
    <location>
        <position position="12"/>
    </location>
    <ligand>
        <name>sn-glycerol 1-phosphate</name>
        <dbReference type="ChEBI" id="CHEBI:57685"/>
    </ligand>
</feature>
<feature type="binding site" evidence="1">
    <location>
        <position position="14"/>
    </location>
    <ligand>
        <name>Mg(2+)</name>
        <dbReference type="ChEBI" id="CHEBI:18420"/>
    </ligand>
</feature>
<feature type="binding site" evidence="1">
    <location>
        <position position="40"/>
    </location>
    <ligand>
        <name>Mg(2+)</name>
        <dbReference type="ChEBI" id="CHEBI:18420"/>
    </ligand>
</feature>
<feature type="binding site" evidence="1">
    <location>
        <begin position="159"/>
        <end position="164"/>
    </location>
    <ligand>
        <name>sn-glycerol 1-phosphate</name>
        <dbReference type="ChEBI" id="CHEBI:57685"/>
    </ligand>
</feature>
<feature type="binding site" evidence="1">
    <location>
        <position position="189"/>
    </location>
    <ligand>
        <name>sn-glycerol 1-phosphate</name>
        <dbReference type="ChEBI" id="CHEBI:57685"/>
    </ligand>
</feature>
<feature type="binding site" evidence="1">
    <location>
        <begin position="209"/>
        <end position="210"/>
    </location>
    <ligand>
        <name>sn-glycerol 1-phosphate</name>
        <dbReference type="ChEBI" id="CHEBI:57685"/>
    </ligand>
</feature>
<sequence length="229" mass="25518">MYDISGWKHVFKLDPNKELSDEHLEMICESGTDAVIVGGSDGVTIDNVLHMLVSIRRYAVPCVLEVSDVEAITPGFDFYYIPSVLNSRKVEWVTGVHHEALKEFGDIMDWDEIFMEGYCVLNPEAKVAQLTDAKCDVTEDDVIAYARLADKLLRLPIFYLEYSGTYGDVELVKNVKAELKQAKLYYGGGISNAEQAKEMAQHADTVVVGNIIYDDIKAALKTVKAVKGE</sequence>
<name>PCRB_BACAN</name>
<evidence type="ECO:0000255" key="1">
    <source>
        <dbReference type="HAMAP-Rule" id="MF_00112"/>
    </source>
</evidence>
<evidence type="ECO:0000269" key="2">
    <source>
    </source>
</evidence>
<evidence type="ECO:0000305" key="3"/>
<gene>
    <name evidence="1" type="primary">pcrB</name>
    <name type="ordered locus">BA_0304</name>
    <name type="ordered locus">GBAA_0304</name>
    <name type="ordered locus">BAS0290</name>
</gene>
<keyword id="KW-0444">Lipid biosynthesis</keyword>
<keyword id="KW-0443">Lipid metabolism</keyword>
<keyword id="KW-0460">Magnesium</keyword>
<keyword id="KW-0479">Metal-binding</keyword>
<keyword id="KW-0594">Phospholipid biosynthesis</keyword>
<keyword id="KW-1208">Phospholipid metabolism</keyword>
<keyword id="KW-1185">Reference proteome</keyword>
<keyword id="KW-0808">Transferase</keyword>
<comment type="function">
    <text evidence="2 3">Prenyltransferase that catalyzes in vivo the transfer of the heptaprenyl moiety of heptaprenyl pyrophosphate (HepPP; 35 carbon atoms) to the C3 hydroxyl of sn-glycerol-1-phosphate (G1P), producing heptaprenylglyceryl phosphate (HepGP) (Probable). This reaction is an ether-bond-formation step in the biosynthesis of archaea-type G1P-based membrane lipids found in Bacillales. To a much lesser extent, is also able to use geranylgeranyl diphosphate (GGPP; C20) as the prenyl donor.</text>
</comment>
<comment type="catalytic activity">
    <reaction evidence="1 2">
        <text>sn-glycerol 1-phosphate + all-trans-heptaprenyl diphosphate = 3-heptaprenyl-sn-glycero-1-phosphate + diphosphate</text>
        <dbReference type="Rhea" id="RHEA:33495"/>
        <dbReference type="ChEBI" id="CHEBI:33019"/>
        <dbReference type="ChEBI" id="CHEBI:57685"/>
        <dbReference type="ChEBI" id="CHEBI:58206"/>
        <dbReference type="ChEBI" id="CHEBI:64781"/>
        <dbReference type="EC" id="2.5.1.n9"/>
    </reaction>
</comment>
<comment type="cofactor">
    <cofactor evidence="1">
        <name>Mg(2+)</name>
        <dbReference type="ChEBI" id="CHEBI:18420"/>
    </cofactor>
</comment>
<comment type="pathway">
    <text evidence="1">Membrane lipid metabolism; glycerophospholipid metabolism.</text>
</comment>
<comment type="subunit">
    <text evidence="1 2">Homodimer.</text>
</comment>
<comment type="similarity">
    <text evidence="1">Belongs to the GGGP/HepGP synthase family. Group I subfamily.</text>
</comment>
<comment type="sequence caution" evidence="3">
    <conflict type="erroneous initiation">
        <sequence resource="EMBL-CDS" id="AAP24339"/>
    </conflict>
    <text>Extended N-terminus.</text>
</comment>
<comment type="sequence caution" evidence="3">
    <conflict type="erroneous initiation">
        <sequence resource="EMBL-CDS" id="AAT29390"/>
    </conflict>
    <text>Extended N-terminus.</text>
</comment>